<reference key="1">
    <citation type="submission" date="2007-10" db="EMBL/GenBank/DDBJ databases">
        <title>Complete sequence of Shewanella pealeana ATCC 700345.</title>
        <authorList>
            <consortium name="US DOE Joint Genome Institute"/>
            <person name="Copeland A."/>
            <person name="Lucas S."/>
            <person name="Lapidus A."/>
            <person name="Barry K."/>
            <person name="Glavina del Rio T."/>
            <person name="Dalin E."/>
            <person name="Tice H."/>
            <person name="Pitluck S."/>
            <person name="Chertkov O."/>
            <person name="Brettin T."/>
            <person name="Bruce D."/>
            <person name="Detter J.C."/>
            <person name="Han C."/>
            <person name="Schmutz J."/>
            <person name="Larimer F."/>
            <person name="Land M."/>
            <person name="Hauser L."/>
            <person name="Kyrpides N."/>
            <person name="Kim E."/>
            <person name="Zhao J.-S.Z."/>
            <person name="Manno D."/>
            <person name="Hawari J."/>
            <person name="Richardson P."/>
        </authorList>
    </citation>
    <scope>NUCLEOTIDE SEQUENCE [LARGE SCALE GENOMIC DNA]</scope>
    <source>
        <strain>ATCC 700345 / ANG-SQ1</strain>
    </source>
</reference>
<feature type="chain" id="PRO_1000082442" description="GMP reductase">
    <location>
        <begin position="1"/>
        <end position="347"/>
    </location>
</feature>
<feature type="active site" description="Thioimidate intermediate" evidence="1">
    <location>
        <position position="186"/>
    </location>
</feature>
<feature type="binding site" evidence="1">
    <location>
        <begin position="108"/>
        <end position="131"/>
    </location>
    <ligand>
        <name>NADP(+)</name>
        <dbReference type="ChEBI" id="CHEBI:58349"/>
    </ligand>
</feature>
<feature type="binding site" evidence="1">
    <location>
        <position position="181"/>
    </location>
    <ligand>
        <name>K(+)</name>
        <dbReference type="ChEBI" id="CHEBI:29103"/>
    </ligand>
</feature>
<feature type="binding site" evidence="1">
    <location>
        <position position="183"/>
    </location>
    <ligand>
        <name>K(+)</name>
        <dbReference type="ChEBI" id="CHEBI:29103"/>
    </ligand>
</feature>
<feature type="binding site" evidence="1">
    <location>
        <begin position="216"/>
        <end position="239"/>
    </location>
    <ligand>
        <name>NADP(+)</name>
        <dbReference type="ChEBI" id="CHEBI:58349"/>
    </ligand>
</feature>
<keyword id="KW-0479">Metal-binding</keyword>
<keyword id="KW-0521">NADP</keyword>
<keyword id="KW-0560">Oxidoreductase</keyword>
<keyword id="KW-0630">Potassium</keyword>
<keyword id="KW-1185">Reference proteome</keyword>
<comment type="function">
    <text evidence="1">Catalyzes the irreversible NADPH-dependent deamination of GMP to IMP. It functions in the conversion of nucleobase, nucleoside and nucleotide derivatives of G to A nucleotides, and in maintaining the intracellular balance of A and G nucleotides.</text>
</comment>
<comment type="catalytic activity">
    <reaction evidence="1">
        <text>IMP + NH4(+) + NADP(+) = GMP + NADPH + 2 H(+)</text>
        <dbReference type="Rhea" id="RHEA:17185"/>
        <dbReference type="ChEBI" id="CHEBI:15378"/>
        <dbReference type="ChEBI" id="CHEBI:28938"/>
        <dbReference type="ChEBI" id="CHEBI:57783"/>
        <dbReference type="ChEBI" id="CHEBI:58053"/>
        <dbReference type="ChEBI" id="CHEBI:58115"/>
        <dbReference type="ChEBI" id="CHEBI:58349"/>
        <dbReference type="EC" id="1.7.1.7"/>
    </reaction>
</comment>
<comment type="subunit">
    <text evidence="1">Homotetramer.</text>
</comment>
<comment type="similarity">
    <text evidence="1">Belongs to the IMPDH/GMPR family. GuaC type 1 subfamily.</text>
</comment>
<sequence>MRIEQDLKLGFKDVLIRPKRSTLKSRSQVDLNRQFTFKHSGKTWSGVPIIAANMDSVASFEMAASLAQHNVMTAVHKHYSVEQWGEFVASQTAEVLQHVMVSSGTSDTDFIKLSEILAKSEDLNFICIDIANGYSEHLVDYVRKVRQAHPQAVISAGNVVTGDMVEELIIAGADIVKVGIGPGSVCTTRVKTGVGYPQLSAIIECADAAHGLGGQIIGDGGCSCAGDVAKAFGGGADFVMLGGMLAGHEQSGGEVVEQDGKMMVKFYGMSSQSAMDKHSGGVAKYRAAEGKTVLLPFKGSVDNTINDIMGGVRSTCTYVGAASLKELTKRTTFIRVQEQENNVYGKE</sequence>
<protein>
    <recommendedName>
        <fullName evidence="1">GMP reductase</fullName>
        <ecNumber evidence="1">1.7.1.7</ecNumber>
    </recommendedName>
    <alternativeName>
        <fullName evidence="1">Guanosine 5'-monophosphate oxidoreductase</fullName>
        <shortName evidence="1">Guanosine monophosphate reductase</shortName>
    </alternativeName>
</protein>
<proteinExistence type="inferred from homology"/>
<name>GUAC_SHEPA</name>
<accession>A8HAF6</accession>
<dbReference type="EC" id="1.7.1.7" evidence="1"/>
<dbReference type="EMBL" id="CP000851">
    <property type="protein sequence ID" value="ABV89543.1"/>
    <property type="molecule type" value="Genomic_DNA"/>
</dbReference>
<dbReference type="RefSeq" id="WP_012157420.1">
    <property type="nucleotide sequence ID" value="NC_009901.1"/>
</dbReference>
<dbReference type="SMR" id="A8HAF6"/>
<dbReference type="STRING" id="398579.Spea_4233"/>
<dbReference type="KEGG" id="spl:Spea_4233"/>
<dbReference type="eggNOG" id="COG0516">
    <property type="taxonomic scope" value="Bacteria"/>
</dbReference>
<dbReference type="HOGENOM" id="CLU_022552_5_3_6"/>
<dbReference type="OrthoDB" id="9805398at2"/>
<dbReference type="Proteomes" id="UP000002608">
    <property type="component" value="Chromosome"/>
</dbReference>
<dbReference type="GO" id="GO:0005829">
    <property type="term" value="C:cytosol"/>
    <property type="evidence" value="ECO:0007669"/>
    <property type="project" value="TreeGrafter"/>
</dbReference>
<dbReference type="GO" id="GO:1902560">
    <property type="term" value="C:GMP reductase complex"/>
    <property type="evidence" value="ECO:0007669"/>
    <property type="project" value="InterPro"/>
</dbReference>
<dbReference type="GO" id="GO:0003920">
    <property type="term" value="F:GMP reductase activity"/>
    <property type="evidence" value="ECO:0007669"/>
    <property type="project" value="UniProtKB-UniRule"/>
</dbReference>
<dbReference type="GO" id="GO:0046872">
    <property type="term" value="F:metal ion binding"/>
    <property type="evidence" value="ECO:0007669"/>
    <property type="project" value="UniProtKB-KW"/>
</dbReference>
<dbReference type="GO" id="GO:0006163">
    <property type="term" value="P:purine nucleotide metabolic process"/>
    <property type="evidence" value="ECO:0007669"/>
    <property type="project" value="UniProtKB-UniRule"/>
</dbReference>
<dbReference type="CDD" id="cd00381">
    <property type="entry name" value="IMPDH"/>
    <property type="match status" value="1"/>
</dbReference>
<dbReference type="FunFam" id="3.20.20.70:FF:000012">
    <property type="entry name" value="GMP reductase"/>
    <property type="match status" value="1"/>
</dbReference>
<dbReference type="Gene3D" id="3.20.20.70">
    <property type="entry name" value="Aldolase class I"/>
    <property type="match status" value="1"/>
</dbReference>
<dbReference type="HAMAP" id="MF_00596">
    <property type="entry name" value="GMP_reduct_type1"/>
    <property type="match status" value="1"/>
</dbReference>
<dbReference type="InterPro" id="IPR013785">
    <property type="entry name" value="Aldolase_TIM"/>
</dbReference>
<dbReference type="InterPro" id="IPR050139">
    <property type="entry name" value="GMP_reductase"/>
</dbReference>
<dbReference type="InterPro" id="IPR005993">
    <property type="entry name" value="GMPR"/>
</dbReference>
<dbReference type="InterPro" id="IPR015875">
    <property type="entry name" value="IMP_DH/GMP_Rdtase_CS"/>
</dbReference>
<dbReference type="InterPro" id="IPR001093">
    <property type="entry name" value="IMP_DH_GMPRt"/>
</dbReference>
<dbReference type="NCBIfam" id="TIGR01305">
    <property type="entry name" value="GMP_reduct_1"/>
    <property type="match status" value="1"/>
</dbReference>
<dbReference type="NCBIfam" id="NF003470">
    <property type="entry name" value="PRK05096.1"/>
    <property type="match status" value="1"/>
</dbReference>
<dbReference type="PANTHER" id="PTHR43170">
    <property type="entry name" value="GMP REDUCTASE"/>
    <property type="match status" value="1"/>
</dbReference>
<dbReference type="PANTHER" id="PTHR43170:SF5">
    <property type="entry name" value="GMP REDUCTASE"/>
    <property type="match status" value="1"/>
</dbReference>
<dbReference type="Pfam" id="PF00478">
    <property type="entry name" value="IMPDH"/>
    <property type="match status" value="1"/>
</dbReference>
<dbReference type="PIRSF" id="PIRSF000235">
    <property type="entry name" value="GMP_reductase"/>
    <property type="match status" value="1"/>
</dbReference>
<dbReference type="SMART" id="SM01240">
    <property type="entry name" value="IMPDH"/>
    <property type="match status" value="1"/>
</dbReference>
<dbReference type="SUPFAM" id="SSF51412">
    <property type="entry name" value="Inosine monophosphate dehydrogenase (IMPDH)"/>
    <property type="match status" value="1"/>
</dbReference>
<dbReference type="PROSITE" id="PS00487">
    <property type="entry name" value="IMP_DH_GMP_RED"/>
    <property type="match status" value="1"/>
</dbReference>
<gene>
    <name evidence="1" type="primary">guaC</name>
    <name type="ordered locus">Spea_4233</name>
</gene>
<evidence type="ECO:0000255" key="1">
    <source>
        <dbReference type="HAMAP-Rule" id="MF_00596"/>
    </source>
</evidence>
<organism>
    <name type="scientific">Shewanella pealeana (strain ATCC 700345 / ANG-SQ1)</name>
    <dbReference type="NCBI Taxonomy" id="398579"/>
    <lineage>
        <taxon>Bacteria</taxon>
        <taxon>Pseudomonadati</taxon>
        <taxon>Pseudomonadota</taxon>
        <taxon>Gammaproteobacteria</taxon>
        <taxon>Alteromonadales</taxon>
        <taxon>Shewanellaceae</taxon>
        <taxon>Shewanella</taxon>
    </lineage>
</organism>